<protein>
    <recommendedName>
        <fullName>Ankyrin repeat domain-containing protein SOWAHA</fullName>
    </recommendedName>
    <alternativeName>
        <fullName>Ankyrin repeat domain-containing protein 43</fullName>
    </alternativeName>
    <alternativeName>
        <fullName>Protein sosondowah homolog A</fullName>
    </alternativeName>
</protein>
<name>SWAHA_MOUSE</name>
<proteinExistence type="evidence at protein level"/>
<gene>
    <name type="primary">Sowaha</name>
    <name type="synonym">Ankrd43</name>
</gene>
<feature type="signal peptide" evidence="1">
    <location>
        <begin position="1"/>
        <end position="19"/>
    </location>
</feature>
<feature type="chain" id="PRO_0000244374" description="Ankyrin repeat domain-containing protein SOWAHA">
    <location>
        <begin position="20"/>
        <end position="548"/>
    </location>
</feature>
<feature type="repeat" description="ANK 1">
    <location>
        <begin position="344"/>
        <end position="373"/>
    </location>
</feature>
<feature type="repeat" description="ANK 2">
    <location>
        <begin position="383"/>
        <end position="413"/>
    </location>
</feature>
<feature type="region of interest" description="Disordered" evidence="2">
    <location>
        <begin position="114"/>
        <end position="212"/>
    </location>
</feature>
<feature type="region of interest" description="Disordered" evidence="2">
    <location>
        <begin position="512"/>
        <end position="548"/>
    </location>
</feature>
<feature type="compositionally biased region" description="Polar residues" evidence="2">
    <location>
        <begin position="136"/>
        <end position="153"/>
    </location>
</feature>
<feature type="compositionally biased region" description="Pro residues" evidence="2">
    <location>
        <begin position="198"/>
        <end position="212"/>
    </location>
</feature>
<feature type="modified residue" description="Phosphoserine" evidence="4">
    <location>
        <position position="258"/>
    </location>
</feature>
<feature type="sequence conflict" description="In Ref. 1; BAC31573." evidence="3" ref="1">
    <original>L</original>
    <variation>V</variation>
    <location>
        <position position="173"/>
    </location>
</feature>
<feature type="sequence conflict" description="In Ref. 3; AAI17864." evidence="3" ref="3">
    <original>E</original>
    <variation>K</variation>
    <location>
        <position position="244"/>
    </location>
</feature>
<organism>
    <name type="scientific">Mus musculus</name>
    <name type="common">Mouse</name>
    <dbReference type="NCBI Taxonomy" id="10090"/>
    <lineage>
        <taxon>Eukaryota</taxon>
        <taxon>Metazoa</taxon>
        <taxon>Chordata</taxon>
        <taxon>Craniata</taxon>
        <taxon>Vertebrata</taxon>
        <taxon>Euteleostomi</taxon>
        <taxon>Mammalia</taxon>
        <taxon>Eutheria</taxon>
        <taxon>Euarchontoglires</taxon>
        <taxon>Glires</taxon>
        <taxon>Rodentia</taxon>
        <taxon>Myomorpha</taxon>
        <taxon>Muroidea</taxon>
        <taxon>Muridae</taxon>
        <taxon>Murinae</taxon>
        <taxon>Mus</taxon>
        <taxon>Mus</taxon>
    </lineage>
</organism>
<reference key="1">
    <citation type="journal article" date="2005" name="Science">
        <title>The transcriptional landscape of the mammalian genome.</title>
        <authorList>
            <person name="Carninci P."/>
            <person name="Kasukawa T."/>
            <person name="Katayama S."/>
            <person name="Gough J."/>
            <person name="Frith M.C."/>
            <person name="Maeda N."/>
            <person name="Oyama R."/>
            <person name="Ravasi T."/>
            <person name="Lenhard B."/>
            <person name="Wells C."/>
            <person name="Kodzius R."/>
            <person name="Shimokawa K."/>
            <person name="Bajic V.B."/>
            <person name="Brenner S.E."/>
            <person name="Batalov S."/>
            <person name="Forrest A.R."/>
            <person name="Zavolan M."/>
            <person name="Davis M.J."/>
            <person name="Wilming L.G."/>
            <person name="Aidinis V."/>
            <person name="Allen J.E."/>
            <person name="Ambesi-Impiombato A."/>
            <person name="Apweiler R."/>
            <person name="Aturaliya R.N."/>
            <person name="Bailey T.L."/>
            <person name="Bansal M."/>
            <person name="Baxter L."/>
            <person name="Beisel K.W."/>
            <person name="Bersano T."/>
            <person name="Bono H."/>
            <person name="Chalk A.M."/>
            <person name="Chiu K.P."/>
            <person name="Choudhary V."/>
            <person name="Christoffels A."/>
            <person name="Clutterbuck D.R."/>
            <person name="Crowe M.L."/>
            <person name="Dalla E."/>
            <person name="Dalrymple B.P."/>
            <person name="de Bono B."/>
            <person name="Della Gatta G."/>
            <person name="di Bernardo D."/>
            <person name="Down T."/>
            <person name="Engstrom P."/>
            <person name="Fagiolini M."/>
            <person name="Faulkner G."/>
            <person name="Fletcher C.F."/>
            <person name="Fukushima T."/>
            <person name="Furuno M."/>
            <person name="Futaki S."/>
            <person name="Gariboldi M."/>
            <person name="Georgii-Hemming P."/>
            <person name="Gingeras T.R."/>
            <person name="Gojobori T."/>
            <person name="Green R.E."/>
            <person name="Gustincich S."/>
            <person name="Harbers M."/>
            <person name="Hayashi Y."/>
            <person name="Hensch T.K."/>
            <person name="Hirokawa N."/>
            <person name="Hill D."/>
            <person name="Huminiecki L."/>
            <person name="Iacono M."/>
            <person name="Ikeo K."/>
            <person name="Iwama A."/>
            <person name="Ishikawa T."/>
            <person name="Jakt M."/>
            <person name="Kanapin A."/>
            <person name="Katoh M."/>
            <person name="Kawasawa Y."/>
            <person name="Kelso J."/>
            <person name="Kitamura H."/>
            <person name="Kitano H."/>
            <person name="Kollias G."/>
            <person name="Krishnan S.P."/>
            <person name="Kruger A."/>
            <person name="Kummerfeld S.K."/>
            <person name="Kurochkin I.V."/>
            <person name="Lareau L.F."/>
            <person name="Lazarevic D."/>
            <person name="Lipovich L."/>
            <person name="Liu J."/>
            <person name="Liuni S."/>
            <person name="McWilliam S."/>
            <person name="Madan Babu M."/>
            <person name="Madera M."/>
            <person name="Marchionni L."/>
            <person name="Matsuda H."/>
            <person name="Matsuzawa S."/>
            <person name="Miki H."/>
            <person name="Mignone F."/>
            <person name="Miyake S."/>
            <person name="Morris K."/>
            <person name="Mottagui-Tabar S."/>
            <person name="Mulder N."/>
            <person name="Nakano N."/>
            <person name="Nakauchi H."/>
            <person name="Ng P."/>
            <person name="Nilsson R."/>
            <person name="Nishiguchi S."/>
            <person name="Nishikawa S."/>
            <person name="Nori F."/>
            <person name="Ohara O."/>
            <person name="Okazaki Y."/>
            <person name="Orlando V."/>
            <person name="Pang K.C."/>
            <person name="Pavan W.J."/>
            <person name="Pavesi G."/>
            <person name="Pesole G."/>
            <person name="Petrovsky N."/>
            <person name="Piazza S."/>
            <person name="Reed J."/>
            <person name="Reid J.F."/>
            <person name="Ring B.Z."/>
            <person name="Ringwald M."/>
            <person name="Rost B."/>
            <person name="Ruan Y."/>
            <person name="Salzberg S.L."/>
            <person name="Sandelin A."/>
            <person name="Schneider C."/>
            <person name="Schoenbach C."/>
            <person name="Sekiguchi K."/>
            <person name="Semple C.A."/>
            <person name="Seno S."/>
            <person name="Sessa L."/>
            <person name="Sheng Y."/>
            <person name="Shibata Y."/>
            <person name="Shimada H."/>
            <person name="Shimada K."/>
            <person name="Silva D."/>
            <person name="Sinclair B."/>
            <person name="Sperling S."/>
            <person name="Stupka E."/>
            <person name="Sugiura K."/>
            <person name="Sultana R."/>
            <person name="Takenaka Y."/>
            <person name="Taki K."/>
            <person name="Tammoja K."/>
            <person name="Tan S.L."/>
            <person name="Tang S."/>
            <person name="Taylor M.S."/>
            <person name="Tegner J."/>
            <person name="Teichmann S.A."/>
            <person name="Ueda H.R."/>
            <person name="van Nimwegen E."/>
            <person name="Verardo R."/>
            <person name="Wei C.L."/>
            <person name="Yagi K."/>
            <person name="Yamanishi H."/>
            <person name="Zabarovsky E."/>
            <person name="Zhu S."/>
            <person name="Zimmer A."/>
            <person name="Hide W."/>
            <person name="Bult C."/>
            <person name="Grimmond S.M."/>
            <person name="Teasdale R.D."/>
            <person name="Liu E.T."/>
            <person name="Brusic V."/>
            <person name="Quackenbush J."/>
            <person name="Wahlestedt C."/>
            <person name="Mattick J.S."/>
            <person name="Hume D.A."/>
            <person name="Kai C."/>
            <person name="Sasaki D."/>
            <person name="Tomaru Y."/>
            <person name="Fukuda S."/>
            <person name="Kanamori-Katayama M."/>
            <person name="Suzuki M."/>
            <person name="Aoki J."/>
            <person name="Arakawa T."/>
            <person name="Iida J."/>
            <person name="Imamura K."/>
            <person name="Itoh M."/>
            <person name="Kato T."/>
            <person name="Kawaji H."/>
            <person name="Kawagashira N."/>
            <person name="Kawashima T."/>
            <person name="Kojima M."/>
            <person name="Kondo S."/>
            <person name="Konno H."/>
            <person name="Nakano K."/>
            <person name="Ninomiya N."/>
            <person name="Nishio T."/>
            <person name="Okada M."/>
            <person name="Plessy C."/>
            <person name="Shibata K."/>
            <person name="Shiraki T."/>
            <person name="Suzuki S."/>
            <person name="Tagami M."/>
            <person name="Waki K."/>
            <person name="Watahiki A."/>
            <person name="Okamura-Oho Y."/>
            <person name="Suzuki H."/>
            <person name="Kawai J."/>
            <person name="Hayashizaki Y."/>
        </authorList>
    </citation>
    <scope>NUCLEOTIDE SEQUENCE [LARGE SCALE MRNA]</scope>
    <source>
        <strain>C57BL/6J</strain>
        <tissue>Brain cortex</tissue>
    </source>
</reference>
<reference key="2">
    <citation type="journal article" date="2009" name="PLoS Biol.">
        <title>Lineage-specific biology revealed by a finished genome assembly of the mouse.</title>
        <authorList>
            <person name="Church D.M."/>
            <person name="Goodstadt L."/>
            <person name="Hillier L.W."/>
            <person name="Zody M.C."/>
            <person name="Goldstein S."/>
            <person name="She X."/>
            <person name="Bult C.J."/>
            <person name="Agarwala R."/>
            <person name="Cherry J.L."/>
            <person name="DiCuccio M."/>
            <person name="Hlavina W."/>
            <person name="Kapustin Y."/>
            <person name="Meric P."/>
            <person name="Maglott D."/>
            <person name="Birtle Z."/>
            <person name="Marques A.C."/>
            <person name="Graves T."/>
            <person name="Zhou S."/>
            <person name="Teague B."/>
            <person name="Potamousis K."/>
            <person name="Churas C."/>
            <person name="Place M."/>
            <person name="Herschleb J."/>
            <person name="Runnheim R."/>
            <person name="Forrest D."/>
            <person name="Amos-Landgraf J."/>
            <person name="Schwartz D.C."/>
            <person name="Cheng Z."/>
            <person name="Lindblad-Toh K."/>
            <person name="Eichler E.E."/>
            <person name="Ponting C.P."/>
        </authorList>
    </citation>
    <scope>NUCLEOTIDE SEQUENCE [LARGE SCALE GENOMIC DNA]</scope>
    <source>
        <strain>C57BL/6J</strain>
    </source>
</reference>
<reference key="3">
    <citation type="journal article" date="2004" name="Genome Res.">
        <title>The status, quality, and expansion of the NIH full-length cDNA project: the Mammalian Gene Collection (MGC).</title>
        <authorList>
            <consortium name="The MGC Project Team"/>
        </authorList>
    </citation>
    <scope>NUCLEOTIDE SEQUENCE [LARGE SCALE MRNA] OF 126-548</scope>
</reference>
<reference key="4">
    <citation type="journal article" date="2010" name="Cell">
        <title>A tissue-specific atlas of mouse protein phosphorylation and expression.</title>
        <authorList>
            <person name="Huttlin E.L."/>
            <person name="Jedrychowski M.P."/>
            <person name="Elias J.E."/>
            <person name="Goswami T."/>
            <person name="Rad R."/>
            <person name="Beausoleil S.A."/>
            <person name="Villen J."/>
            <person name="Haas W."/>
            <person name="Sowa M.E."/>
            <person name="Gygi S.P."/>
        </authorList>
    </citation>
    <scope>PHOSPHORYLATION [LARGE SCALE ANALYSIS] AT SER-258</scope>
    <scope>IDENTIFICATION BY MASS SPECTROMETRY [LARGE SCALE ANALYSIS]</scope>
    <source>
        <tissue>Spleen</tissue>
    </source>
</reference>
<dbReference type="EMBL" id="AK043538">
    <property type="protein sequence ID" value="BAC31573.1"/>
    <property type="status" value="ALT_FRAME"/>
    <property type="molecule type" value="mRNA"/>
</dbReference>
<dbReference type="EMBL" id="AL596095">
    <property type="status" value="NOT_ANNOTATED_CDS"/>
    <property type="molecule type" value="Genomic_DNA"/>
</dbReference>
<dbReference type="EMBL" id="BC117863">
    <property type="protein sequence ID" value="AAI17864.1"/>
    <property type="status" value="ALT_INIT"/>
    <property type="molecule type" value="mRNA"/>
</dbReference>
<dbReference type="CCDS" id="CCDS24681.2"/>
<dbReference type="RefSeq" id="NP_898996.2">
    <property type="nucleotide sequence ID" value="NM_183173.2"/>
</dbReference>
<dbReference type="SMR" id="Q8BLS7"/>
<dbReference type="FunCoup" id="Q8BLS7">
    <property type="interactions" value="11"/>
</dbReference>
<dbReference type="STRING" id="10090.ENSMUSP00000100561"/>
<dbReference type="iPTMnet" id="Q8BLS7"/>
<dbReference type="PhosphoSitePlus" id="Q8BLS7"/>
<dbReference type="PaxDb" id="10090-ENSMUSP00000100561"/>
<dbReference type="ProteomicsDB" id="254613"/>
<dbReference type="Antibodypedia" id="74825">
    <property type="antibodies" value="4 antibodies from 4 providers"/>
</dbReference>
<dbReference type="Ensembl" id="ENSMUST00000104955.4">
    <property type="protein sequence ID" value="ENSMUSP00000100561.3"/>
    <property type="gene ID" value="ENSMUSG00000044352.7"/>
</dbReference>
<dbReference type="GeneID" id="237761"/>
<dbReference type="KEGG" id="mmu:237761"/>
<dbReference type="UCSC" id="uc007iwf.1">
    <property type="organism name" value="mouse"/>
</dbReference>
<dbReference type="AGR" id="MGI:2687280"/>
<dbReference type="CTD" id="134548"/>
<dbReference type="MGI" id="MGI:2687280">
    <property type="gene designation" value="Sowaha"/>
</dbReference>
<dbReference type="VEuPathDB" id="HostDB:ENSMUSG00000044352"/>
<dbReference type="eggNOG" id="ENOG502RXAT">
    <property type="taxonomic scope" value="Eukaryota"/>
</dbReference>
<dbReference type="GeneTree" id="ENSGT00950000183003"/>
<dbReference type="HOGENOM" id="CLU_041239_1_0_1"/>
<dbReference type="InParanoid" id="Q8BLS7"/>
<dbReference type="OMA" id="PPKPCML"/>
<dbReference type="OrthoDB" id="432281at2759"/>
<dbReference type="PhylomeDB" id="Q8BLS7"/>
<dbReference type="TreeFam" id="TF331362"/>
<dbReference type="BioGRID-ORCS" id="237761">
    <property type="hits" value="1 hit in 77 CRISPR screens"/>
</dbReference>
<dbReference type="PRO" id="PR:Q8BLS7"/>
<dbReference type="Proteomes" id="UP000000589">
    <property type="component" value="Chromosome 11"/>
</dbReference>
<dbReference type="RNAct" id="Q8BLS7">
    <property type="molecule type" value="protein"/>
</dbReference>
<dbReference type="Bgee" id="ENSMUSG00000044352">
    <property type="expression patterns" value="Expressed in CA3 field of hippocampus and 114 other cell types or tissues"/>
</dbReference>
<dbReference type="Gene3D" id="1.25.40.20">
    <property type="entry name" value="Ankyrin repeat-containing domain"/>
    <property type="match status" value="1"/>
</dbReference>
<dbReference type="InterPro" id="IPR002110">
    <property type="entry name" value="Ankyrin_rpt"/>
</dbReference>
<dbReference type="InterPro" id="IPR036770">
    <property type="entry name" value="Ankyrin_rpt-contain_sf"/>
</dbReference>
<dbReference type="PANTHER" id="PTHR14491:SF2">
    <property type="entry name" value="ANKYRIN REPEAT DOMAIN-CONTAINING PROTEIN SOWAHA"/>
    <property type="match status" value="1"/>
</dbReference>
<dbReference type="PANTHER" id="PTHR14491">
    <property type="entry name" value="SOSONDOWAH, ISOFORM G"/>
    <property type="match status" value="1"/>
</dbReference>
<dbReference type="Pfam" id="PF12796">
    <property type="entry name" value="Ank_2"/>
    <property type="match status" value="1"/>
</dbReference>
<dbReference type="SMART" id="SM00248">
    <property type="entry name" value="ANK"/>
    <property type="match status" value="2"/>
</dbReference>
<dbReference type="SUPFAM" id="SSF48403">
    <property type="entry name" value="Ankyrin repeat"/>
    <property type="match status" value="1"/>
</dbReference>
<dbReference type="PROSITE" id="PS50297">
    <property type="entry name" value="ANK_REP_REGION"/>
    <property type="match status" value="1"/>
</dbReference>
<dbReference type="PROSITE" id="PS50088">
    <property type="entry name" value="ANK_REPEAT"/>
    <property type="match status" value="2"/>
</dbReference>
<comment type="similarity">
    <text evidence="3">Belongs to the SOWAH family.</text>
</comment>
<comment type="sequence caution" evidence="3">
    <conflict type="erroneous initiation">
        <sequence resource="EMBL-CDS" id="AAI17864"/>
    </conflict>
    <text>Truncated N-terminus.</text>
</comment>
<comment type="sequence caution" evidence="3">
    <conflict type="frameshift">
        <sequence resource="EMBL-CDS" id="BAC31573"/>
    </conflict>
</comment>
<evidence type="ECO:0000255" key="1"/>
<evidence type="ECO:0000256" key="2">
    <source>
        <dbReference type="SAM" id="MobiDB-lite"/>
    </source>
</evidence>
<evidence type="ECO:0000305" key="3"/>
<evidence type="ECO:0007744" key="4">
    <source>
    </source>
</evidence>
<keyword id="KW-0040">ANK repeat</keyword>
<keyword id="KW-0597">Phosphoprotein</keyword>
<keyword id="KW-1185">Reference proteome</keyword>
<keyword id="KW-0677">Repeat</keyword>
<keyword id="KW-0732">Signal</keyword>
<sequence length="548" mass="57749">MALAAAAAAAAAAAGVSQAAVLGFLREHGGQVRNSELLSRFKPLLDAGDPRGRAARRDRFKQFVNNVAVVKELDGVKFVVLRKKPRPPEGPEAPLPSSPGVPAALAQCAAVPAEDNCAPGAPHSPQRSGEPPEDSSAPSELQHTPETLPSEVTQVEAPSGSAPQPGGPEDPALPRSSELARPASVPSGLALTSTESPGPEPAPPTAQVPPQKPCMLPVRCVVPGPAALRIRAEEQGLRRQRSEEPSPRGSPMLLRRLSVEESGLGLHLGPGRSPHLRRLSRAGPRLLSPDTEEMPVAPLPSPAVPLEPTEHEWLVRTASGRWSHQLHGLLLRDRGLAAKRDFMSGFTALHWAAKNGDREMALQLVEVARRGGAPVDVNARSHGGYTPLHLAALHGHEDAAVLLVVRLGAQVHVRDYSGRRAYQYLRPGSSYALRRLLGDPGLRSMMEPDAASGGSGSLVSRHPVQVAATILSSTTSAFLGVLADDLMLQDLARGLKKSSSFSKFLGASPMAPRKKTKIRGGLPSFTEISHRSTPGPLAGLVPSLPPPT</sequence>
<accession>Q8BLS7</accession>
<accession>Q149C7</accession>